<name>TIPIN_CAEBR</name>
<organism>
    <name type="scientific">Caenorhabditis briggsae</name>
    <dbReference type="NCBI Taxonomy" id="6238"/>
    <lineage>
        <taxon>Eukaryota</taxon>
        <taxon>Metazoa</taxon>
        <taxon>Ecdysozoa</taxon>
        <taxon>Nematoda</taxon>
        <taxon>Chromadorea</taxon>
        <taxon>Rhabditida</taxon>
        <taxon>Rhabditina</taxon>
        <taxon>Rhabditomorpha</taxon>
        <taxon>Rhabditoidea</taxon>
        <taxon>Rhabditidae</taxon>
        <taxon>Peloderinae</taxon>
        <taxon>Caenorhabditis</taxon>
    </lineage>
</organism>
<sequence length="239" mass="27956">MDEMDDFFGNDELDREPSPFGEEAIEDNTGEEGSRRIIEPKLLRTKKLTNPRLALNEKTLTGPKGITALREAFQNFNPNPKDDPYKNLEKMMKKYAYWGHLMFPKMKTEDVLNRVETLGTRRQVKLYIMKQRLGESTDDVENEKRETKSKNGIIDDGADDDEDDLFNDLPEKETPTKPINHTEKVVDSPEKKNGQVSNNDAEEEEYRMMEEERLREEQEAREAEAEDELMEDFDLNNDW</sequence>
<feature type="chain" id="PRO_0000305259" description="Protein TIPIN homolog">
    <location>
        <begin position="1"/>
        <end position="239"/>
    </location>
</feature>
<feature type="region of interest" description="Disordered" evidence="2">
    <location>
        <begin position="1"/>
        <end position="38"/>
    </location>
</feature>
<feature type="region of interest" description="Disordered" evidence="2">
    <location>
        <begin position="135"/>
        <end position="239"/>
    </location>
</feature>
<feature type="compositionally biased region" description="Acidic residues" evidence="2">
    <location>
        <begin position="1"/>
        <end position="14"/>
    </location>
</feature>
<feature type="compositionally biased region" description="Acidic residues" evidence="2">
    <location>
        <begin position="156"/>
        <end position="166"/>
    </location>
</feature>
<feature type="compositionally biased region" description="Basic and acidic residues" evidence="2">
    <location>
        <begin position="169"/>
        <end position="193"/>
    </location>
</feature>
<feature type="compositionally biased region" description="Basic and acidic residues" evidence="2">
    <location>
        <begin position="206"/>
        <end position="223"/>
    </location>
</feature>
<feature type="compositionally biased region" description="Acidic residues" evidence="2">
    <location>
        <begin position="224"/>
        <end position="239"/>
    </location>
</feature>
<protein>
    <recommendedName>
        <fullName>Protein TIPIN homolog</fullName>
    </recommendedName>
    <alternativeName>
        <fullName>CSM3 homolog</fullName>
    </alternativeName>
</protein>
<dbReference type="EMBL" id="HE600906">
    <property type="protein sequence ID" value="CAP24784.1"/>
    <property type="molecule type" value="Genomic_DNA"/>
</dbReference>
<dbReference type="RefSeq" id="XP_002639397.1">
    <property type="nucleotide sequence ID" value="XM_002639351.1"/>
</dbReference>
<dbReference type="SMR" id="Q61XH2"/>
<dbReference type="FunCoup" id="Q61XH2">
    <property type="interactions" value="1558"/>
</dbReference>
<dbReference type="STRING" id="6238.Q61XH2"/>
<dbReference type="EnsemblMetazoa" id="CBG03985.1">
    <property type="protein sequence ID" value="CBG03985.1"/>
    <property type="gene ID" value="WBGene00026738"/>
</dbReference>
<dbReference type="GeneID" id="8581390"/>
<dbReference type="KEGG" id="cbr:CBG_03985"/>
<dbReference type="CTD" id="8581390"/>
<dbReference type="WormBase" id="CBG03985">
    <property type="protein sequence ID" value="CBP14958"/>
    <property type="gene ID" value="WBGene00026738"/>
    <property type="gene designation" value="Cbr-tipn-1"/>
</dbReference>
<dbReference type="eggNOG" id="KOG3004">
    <property type="taxonomic scope" value="Eukaryota"/>
</dbReference>
<dbReference type="HOGENOM" id="CLU_1181146_0_0_1"/>
<dbReference type="InParanoid" id="Q61XH2"/>
<dbReference type="OMA" id="MKKYAYW"/>
<dbReference type="OrthoDB" id="437078at2759"/>
<dbReference type="Proteomes" id="UP000008549">
    <property type="component" value="Unassembled WGS sequence"/>
</dbReference>
<dbReference type="GO" id="GO:0000785">
    <property type="term" value="C:chromatin"/>
    <property type="evidence" value="ECO:0000250"/>
    <property type="project" value="UniProtKB"/>
</dbReference>
<dbReference type="GO" id="GO:0005737">
    <property type="term" value="C:cytoplasm"/>
    <property type="evidence" value="ECO:0007669"/>
    <property type="project" value="UniProtKB-SubCell"/>
</dbReference>
<dbReference type="GO" id="GO:0005634">
    <property type="term" value="C:nucleus"/>
    <property type="evidence" value="ECO:0000250"/>
    <property type="project" value="UniProtKB"/>
</dbReference>
<dbReference type="GO" id="GO:0031298">
    <property type="term" value="C:replication fork protection complex"/>
    <property type="evidence" value="ECO:0000318"/>
    <property type="project" value="GO_Central"/>
</dbReference>
<dbReference type="GO" id="GO:0003677">
    <property type="term" value="F:DNA binding"/>
    <property type="evidence" value="ECO:0000318"/>
    <property type="project" value="GO_Central"/>
</dbReference>
<dbReference type="GO" id="GO:0044770">
    <property type="term" value="P:cell cycle phase transition"/>
    <property type="evidence" value="ECO:0000250"/>
    <property type="project" value="UniProtKB"/>
</dbReference>
<dbReference type="GO" id="GO:0051301">
    <property type="term" value="P:cell division"/>
    <property type="evidence" value="ECO:0007669"/>
    <property type="project" value="UniProtKB-KW"/>
</dbReference>
<dbReference type="GO" id="GO:0000076">
    <property type="term" value="P:DNA replication checkpoint signaling"/>
    <property type="evidence" value="ECO:0000250"/>
    <property type="project" value="UniProtKB"/>
</dbReference>
<dbReference type="GO" id="GO:0031573">
    <property type="term" value="P:mitotic intra-S DNA damage checkpoint signaling"/>
    <property type="evidence" value="ECO:0000250"/>
    <property type="project" value="UniProtKB"/>
</dbReference>
<dbReference type="GO" id="GO:0008284">
    <property type="term" value="P:positive regulation of cell population proliferation"/>
    <property type="evidence" value="ECO:0000250"/>
    <property type="project" value="UniProtKB"/>
</dbReference>
<dbReference type="GO" id="GO:0043111">
    <property type="term" value="P:replication fork arrest"/>
    <property type="evidence" value="ECO:0000318"/>
    <property type="project" value="GO_Central"/>
</dbReference>
<dbReference type="GO" id="GO:0031297">
    <property type="term" value="P:replication fork processing"/>
    <property type="evidence" value="ECO:0007669"/>
    <property type="project" value="InterPro"/>
</dbReference>
<dbReference type="InterPro" id="IPR012923">
    <property type="entry name" value="Csm3"/>
</dbReference>
<dbReference type="InterPro" id="IPR040038">
    <property type="entry name" value="TIPIN/Csm3/Swi3"/>
</dbReference>
<dbReference type="PANTHER" id="PTHR13220">
    <property type="entry name" value="TIMELESS INTERACTING-RELATED"/>
    <property type="match status" value="1"/>
</dbReference>
<dbReference type="PANTHER" id="PTHR13220:SF11">
    <property type="entry name" value="TIMELESS-INTERACTING PROTEIN"/>
    <property type="match status" value="1"/>
</dbReference>
<dbReference type="Pfam" id="PF07962">
    <property type="entry name" value="Swi3"/>
    <property type="match status" value="1"/>
</dbReference>
<keyword id="KW-0131">Cell cycle</keyword>
<keyword id="KW-0132">Cell division</keyword>
<keyword id="KW-0963">Cytoplasm</keyword>
<keyword id="KW-0227">DNA damage</keyword>
<keyword id="KW-0498">Mitosis</keyword>
<keyword id="KW-0539">Nucleus</keyword>
<keyword id="KW-1185">Reference proteome</keyword>
<accession>Q61XH2</accession>
<accession>A8WVX1</accession>
<evidence type="ECO:0000250" key="1">
    <source>
        <dbReference type="UniProtKB" id="Q9BVW5"/>
    </source>
</evidence>
<evidence type="ECO:0000256" key="2">
    <source>
        <dbReference type="SAM" id="MobiDB-lite"/>
    </source>
</evidence>
<evidence type="ECO:0000305" key="3"/>
<evidence type="ECO:0000312" key="4">
    <source>
        <dbReference type="WormBase" id="CBG03985"/>
    </source>
</evidence>
<gene>
    <name evidence="4" type="primary">tipn-1</name>
    <name evidence="4" type="ORF">CBG03985</name>
</gene>
<comment type="function">
    <text evidence="1">Required for normal progression of S-phase. Important for cell survival after DNA damage or replication stress.</text>
</comment>
<comment type="subcellular location">
    <subcellularLocation>
        <location evidence="1">Cytoplasm</location>
    </subcellularLocation>
    <subcellularLocation>
        <location evidence="1">Nucleus</location>
    </subcellularLocation>
</comment>
<comment type="similarity">
    <text evidence="3">Belongs to the CSM3 family.</text>
</comment>
<reference key="1">
    <citation type="journal article" date="2003" name="PLoS Biol.">
        <title>The genome sequence of Caenorhabditis briggsae: a platform for comparative genomics.</title>
        <authorList>
            <person name="Stein L.D."/>
            <person name="Bao Z."/>
            <person name="Blasiar D."/>
            <person name="Blumenthal T."/>
            <person name="Brent M.R."/>
            <person name="Chen N."/>
            <person name="Chinwalla A."/>
            <person name="Clarke L."/>
            <person name="Clee C."/>
            <person name="Coghlan A."/>
            <person name="Coulson A."/>
            <person name="D'Eustachio P."/>
            <person name="Fitch D.H.A."/>
            <person name="Fulton L.A."/>
            <person name="Fulton R.E."/>
            <person name="Griffiths-Jones S."/>
            <person name="Harris T.W."/>
            <person name="Hillier L.W."/>
            <person name="Kamath R."/>
            <person name="Kuwabara P.E."/>
            <person name="Mardis E.R."/>
            <person name="Marra M.A."/>
            <person name="Miner T.L."/>
            <person name="Minx P."/>
            <person name="Mullikin J.C."/>
            <person name="Plumb R.W."/>
            <person name="Rogers J."/>
            <person name="Schein J.E."/>
            <person name="Sohrmann M."/>
            <person name="Spieth J."/>
            <person name="Stajich J.E."/>
            <person name="Wei C."/>
            <person name="Willey D."/>
            <person name="Wilson R.K."/>
            <person name="Durbin R.M."/>
            <person name="Waterston R.H."/>
        </authorList>
    </citation>
    <scope>NUCLEOTIDE SEQUENCE [LARGE SCALE GENOMIC DNA]</scope>
    <source>
        <strain>AF16</strain>
    </source>
</reference>
<proteinExistence type="inferred from homology"/>